<feature type="chain" id="PRO_0000230084" description="Transcriptional regulator MraZ">
    <location>
        <begin position="1"/>
        <end position="142"/>
    </location>
</feature>
<feature type="domain" description="SpoVT-AbrB 1" evidence="2">
    <location>
        <begin position="5"/>
        <end position="48"/>
    </location>
</feature>
<feature type="domain" description="SpoVT-AbrB 2" evidence="2">
    <location>
        <begin position="77"/>
        <end position="120"/>
    </location>
</feature>
<organism>
    <name type="scientific">Dehalococcoides mccartyi (strain ATCC BAA-2266 / KCTC 15142 / 195)</name>
    <name type="common">Dehalococcoides ethenogenes (strain 195)</name>
    <dbReference type="NCBI Taxonomy" id="243164"/>
    <lineage>
        <taxon>Bacteria</taxon>
        <taxon>Bacillati</taxon>
        <taxon>Chloroflexota</taxon>
        <taxon>Dehalococcoidia</taxon>
        <taxon>Dehalococcoidales</taxon>
        <taxon>Dehalococcoidaceae</taxon>
        <taxon>Dehalococcoides</taxon>
    </lineage>
</organism>
<comment type="subunit">
    <text evidence="1">Forms oligomers.</text>
</comment>
<comment type="subcellular location">
    <subcellularLocation>
        <location evidence="1">Cytoplasm</location>
        <location evidence="1">Nucleoid</location>
    </subcellularLocation>
</comment>
<comment type="similarity">
    <text evidence="1">Belongs to the MraZ family.</text>
</comment>
<gene>
    <name evidence="1" type="primary">mraZ</name>
    <name type="ordered locus">DET0340</name>
</gene>
<accession>Q3Z9L2</accession>
<dbReference type="EMBL" id="CP000027">
    <property type="protein sequence ID" value="AAW40415.1"/>
    <property type="molecule type" value="Genomic_DNA"/>
</dbReference>
<dbReference type="RefSeq" id="WP_010936120.1">
    <property type="nucleotide sequence ID" value="NC_002936.3"/>
</dbReference>
<dbReference type="SMR" id="Q3Z9L2"/>
<dbReference type="FunCoup" id="Q3Z9L2">
    <property type="interactions" value="168"/>
</dbReference>
<dbReference type="STRING" id="243164.DET0340"/>
<dbReference type="GeneID" id="3230379"/>
<dbReference type="KEGG" id="det:DET0340"/>
<dbReference type="PATRIC" id="fig|243164.10.peg.320"/>
<dbReference type="eggNOG" id="COG2001">
    <property type="taxonomic scope" value="Bacteria"/>
</dbReference>
<dbReference type="HOGENOM" id="CLU_107907_0_3_0"/>
<dbReference type="InParanoid" id="Q3Z9L2"/>
<dbReference type="Proteomes" id="UP000008289">
    <property type="component" value="Chromosome"/>
</dbReference>
<dbReference type="GO" id="GO:0005737">
    <property type="term" value="C:cytoplasm"/>
    <property type="evidence" value="ECO:0007669"/>
    <property type="project" value="UniProtKB-UniRule"/>
</dbReference>
<dbReference type="GO" id="GO:0009295">
    <property type="term" value="C:nucleoid"/>
    <property type="evidence" value="ECO:0007669"/>
    <property type="project" value="UniProtKB-SubCell"/>
</dbReference>
<dbReference type="GO" id="GO:0003700">
    <property type="term" value="F:DNA-binding transcription factor activity"/>
    <property type="evidence" value="ECO:0007669"/>
    <property type="project" value="UniProtKB-UniRule"/>
</dbReference>
<dbReference type="GO" id="GO:0000976">
    <property type="term" value="F:transcription cis-regulatory region binding"/>
    <property type="evidence" value="ECO:0007669"/>
    <property type="project" value="TreeGrafter"/>
</dbReference>
<dbReference type="GO" id="GO:2000143">
    <property type="term" value="P:negative regulation of DNA-templated transcription initiation"/>
    <property type="evidence" value="ECO:0007669"/>
    <property type="project" value="TreeGrafter"/>
</dbReference>
<dbReference type="CDD" id="cd16321">
    <property type="entry name" value="MraZ_C"/>
    <property type="match status" value="1"/>
</dbReference>
<dbReference type="CDD" id="cd16320">
    <property type="entry name" value="MraZ_N"/>
    <property type="match status" value="1"/>
</dbReference>
<dbReference type="Gene3D" id="3.40.1550.20">
    <property type="entry name" value="Transcriptional regulator MraZ domain"/>
    <property type="match status" value="1"/>
</dbReference>
<dbReference type="HAMAP" id="MF_01008">
    <property type="entry name" value="MraZ"/>
    <property type="match status" value="1"/>
</dbReference>
<dbReference type="InterPro" id="IPR003444">
    <property type="entry name" value="MraZ"/>
</dbReference>
<dbReference type="InterPro" id="IPR035644">
    <property type="entry name" value="MraZ_C"/>
</dbReference>
<dbReference type="InterPro" id="IPR020603">
    <property type="entry name" value="MraZ_dom"/>
</dbReference>
<dbReference type="InterPro" id="IPR035642">
    <property type="entry name" value="MraZ_N"/>
</dbReference>
<dbReference type="InterPro" id="IPR038619">
    <property type="entry name" value="MraZ_sf"/>
</dbReference>
<dbReference type="InterPro" id="IPR007159">
    <property type="entry name" value="SpoVT-AbrB_dom"/>
</dbReference>
<dbReference type="InterPro" id="IPR037914">
    <property type="entry name" value="SpoVT-AbrB_sf"/>
</dbReference>
<dbReference type="NCBIfam" id="TIGR00242">
    <property type="entry name" value="division/cell wall cluster transcriptional repressor MraZ"/>
    <property type="match status" value="1"/>
</dbReference>
<dbReference type="PANTHER" id="PTHR34701">
    <property type="entry name" value="TRANSCRIPTIONAL REGULATOR MRAZ"/>
    <property type="match status" value="1"/>
</dbReference>
<dbReference type="PANTHER" id="PTHR34701:SF1">
    <property type="entry name" value="TRANSCRIPTIONAL REGULATOR MRAZ"/>
    <property type="match status" value="1"/>
</dbReference>
<dbReference type="Pfam" id="PF02381">
    <property type="entry name" value="MraZ"/>
    <property type="match status" value="2"/>
</dbReference>
<dbReference type="SUPFAM" id="SSF89447">
    <property type="entry name" value="AbrB/MazE/MraZ-like"/>
    <property type="match status" value="1"/>
</dbReference>
<dbReference type="PROSITE" id="PS51740">
    <property type="entry name" value="SPOVT_ABRB"/>
    <property type="match status" value="2"/>
</dbReference>
<proteinExistence type="inferred from homology"/>
<keyword id="KW-0963">Cytoplasm</keyword>
<keyword id="KW-0238">DNA-binding</keyword>
<keyword id="KW-0677">Repeat</keyword>
<keyword id="KW-0804">Transcription</keyword>
<keyword id="KW-0805">Transcription regulation</keyword>
<name>MRAZ_DEHM1</name>
<reference key="1">
    <citation type="journal article" date="2005" name="Science">
        <title>Genome sequence of the PCE-dechlorinating bacterium Dehalococcoides ethenogenes.</title>
        <authorList>
            <person name="Seshadri R."/>
            <person name="Adrian L."/>
            <person name="Fouts D.E."/>
            <person name="Eisen J.A."/>
            <person name="Phillippy A.M."/>
            <person name="Methe B.A."/>
            <person name="Ward N.L."/>
            <person name="Nelson W.C."/>
            <person name="DeBoy R.T."/>
            <person name="Khouri H.M."/>
            <person name="Kolonay J.F."/>
            <person name="Dodson R.J."/>
            <person name="Daugherty S.C."/>
            <person name="Brinkac L.M."/>
            <person name="Sullivan S.A."/>
            <person name="Madupu R."/>
            <person name="Nelson K.E."/>
            <person name="Kang K.H."/>
            <person name="Impraim M."/>
            <person name="Tran K."/>
            <person name="Robinson J.M."/>
            <person name="Forberger H.A."/>
            <person name="Fraser C.M."/>
            <person name="Zinder S.H."/>
            <person name="Heidelberg J.F."/>
        </authorList>
    </citation>
    <scope>NUCLEOTIDE SEQUENCE [LARGE SCALE GENOMIC DNA]</scope>
    <source>
        <strain>ATCC BAA-2266 / KCTC 15142 / 195</strain>
    </source>
</reference>
<protein>
    <recommendedName>
        <fullName>Transcriptional regulator MraZ</fullName>
    </recommendedName>
</protein>
<sequence>MFFGEFEYKLDEKGRFPLPPGIRPSMKDGLILAPGTGEKCIYAYPLCEWKKLSESLKSTTVAPSKMRRLNRALFALAFDVNLDAQGRLTLPAPLKSYAGVNIEVIVAGVNNYIEIWDKETWESEKKASQEQAWQIIETLEGN</sequence>
<evidence type="ECO:0000255" key="1">
    <source>
        <dbReference type="HAMAP-Rule" id="MF_01008"/>
    </source>
</evidence>
<evidence type="ECO:0000255" key="2">
    <source>
        <dbReference type="PROSITE-ProRule" id="PRU01076"/>
    </source>
</evidence>